<comment type="function">
    <text evidence="1">Catalyzes the base-exchange of a guanine (G) residue with the queuine precursor 7-aminomethyl-7-deazaguanine (PreQ1) at position 34 (anticodon wobble position) in tRNAs with GU(N) anticodons (tRNA-Asp, -Asn, -His and -Tyr). Catalysis occurs through a double-displacement mechanism. The nucleophile active site attacks the C1' of nucleotide 34 to detach the guanine base from the RNA, forming a covalent enzyme-RNA intermediate. The proton acceptor active site deprotonates the incoming PreQ1, allowing a nucleophilic attack on the C1' of the ribose to form the product. After dissociation, two additional enzymatic reactions on the tRNA convert PreQ1 to queuine (Q), resulting in the hypermodified nucleoside queuosine (7-(((4,5-cis-dihydroxy-2-cyclopenten-1-yl)amino)methyl)-7-deazaguanosine).</text>
</comment>
<comment type="catalytic activity">
    <reaction evidence="1">
        <text>7-aminomethyl-7-carbaguanine + guanosine(34) in tRNA = 7-aminomethyl-7-carbaguanosine(34) in tRNA + guanine</text>
        <dbReference type="Rhea" id="RHEA:24104"/>
        <dbReference type="Rhea" id="RHEA-COMP:10341"/>
        <dbReference type="Rhea" id="RHEA-COMP:10342"/>
        <dbReference type="ChEBI" id="CHEBI:16235"/>
        <dbReference type="ChEBI" id="CHEBI:58703"/>
        <dbReference type="ChEBI" id="CHEBI:74269"/>
        <dbReference type="ChEBI" id="CHEBI:82833"/>
        <dbReference type="EC" id="2.4.2.29"/>
    </reaction>
</comment>
<comment type="cofactor">
    <cofactor evidence="1">
        <name>Zn(2+)</name>
        <dbReference type="ChEBI" id="CHEBI:29105"/>
    </cofactor>
    <text evidence="1">Binds 1 zinc ion per subunit.</text>
</comment>
<comment type="pathway">
    <text evidence="1">tRNA modification; tRNA-queuosine biosynthesis.</text>
</comment>
<comment type="subunit">
    <text evidence="1">Homodimer. Within each dimer, one monomer is responsible for RNA recognition and catalysis, while the other monomer binds to the replacement base PreQ1.</text>
</comment>
<comment type="similarity">
    <text evidence="1">Belongs to the queuine tRNA-ribosyltransferase family.</text>
</comment>
<gene>
    <name evidence="1" type="primary">tgt</name>
    <name type="ordered locus">SAV1639</name>
</gene>
<evidence type="ECO:0000255" key="1">
    <source>
        <dbReference type="HAMAP-Rule" id="MF_00168"/>
    </source>
</evidence>
<proteinExistence type="inferred from homology"/>
<feature type="chain" id="PRO_0000135523" description="Queuine tRNA-ribosyltransferase">
    <location>
        <begin position="1"/>
        <end position="379"/>
    </location>
</feature>
<feature type="region of interest" description="RNA binding" evidence="1">
    <location>
        <begin position="249"/>
        <end position="255"/>
    </location>
</feature>
<feature type="region of interest" description="RNA binding; important for wobble base 34 recognition" evidence="1">
    <location>
        <begin position="273"/>
        <end position="277"/>
    </location>
</feature>
<feature type="active site" description="Proton acceptor" evidence="1">
    <location>
        <position position="94"/>
    </location>
</feature>
<feature type="active site" description="Nucleophile" evidence="1">
    <location>
        <position position="268"/>
    </location>
</feature>
<feature type="binding site" evidence="1">
    <location>
        <begin position="94"/>
        <end position="98"/>
    </location>
    <ligand>
        <name>substrate</name>
    </ligand>
</feature>
<feature type="binding site" evidence="1">
    <location>
        <position position="148"/>
    </location>
    <ligand>
        <name>substrate</name>
    </ligand>
</feature>
<feature type="binding site" evidence="1">
    <location>
        <position position="191"/>
    </location>
    <ligand>
        <name>substrate</name>
    </ligand>
</feature>
<feature type="binding site" evidence="1">
    <location>
        <position position="218"/>
    </location>
    <ligand>
        <name>substrate</name>
    </ligand>
</feature>
<feature type="binding site" evidence="1">
    <location>
        <position position="306"/>
    </location>
    <ligand>
        <name>Zn(2+)</name>
        <dbReference type="ChEBI" id="CHEBI:29105"/>
    </ligand>
</feature>
<feature type="binding site" evidence="1">
    <location>
        <position position="308"/>
    </location>
    <ligand>
        <name>Zn(2+)</name>
        <dbReference type="ChEBI" id="CHEBI:29105"/>
    </ligand>
</feature>
<feature type="binding site" evidence="1">
    <location>
        <position position="311"/>
    </location>
    <ligand>
        <name>Zn(2+)</name>
        <dbReference type="ChEBI" id="CHEBI:29105"/>
    </ligand>
</feature>
<feature type="binding site" evidence="1">
    <location>
        <position position="337"/>
    </location>
    <ligand>
        <name>Zn(2+)</name>
        <dbReference type="ChEBI" id="CHEBI:29105"/>
    </ligand>
</feature>
<keyword id="KW-0328">Glycosyltransferase</keyword>
<keyword id="KW-0479">Metal-binding</keyword>
<keyword id="KW-0671">Queuosine biosynthesis</keyword>
<keyword id="KW-0808">Transferase</keyword>
<keyword id="KW-0819">tRNA processing</keyword>
<keyword id="KW-0862">Zinc</keyword>
<name>TGT_STAAM</name>
<sequence>MPAVTYEHIKTCKQSGARLGIVHTPHGSFETPMFMPVGTKATVKTMSPEELRQIEAKIILGNTYHLWLQPGNDIIKHAGGLHKFMNWDGPILTDSGGFQVFSLSNLRKITEEGVEFRHHTNGSKLFLSPEKSMQIQNDLGSDIMMAFDECPPMPAEYDYVKKSIERTTRWAKRCLDAHQRPEDQALFGIIQGGEYEDLREQSAKDLVELDFPGYAIGGLSVGEPKPVMYKMVEHTEQFMPKDKPRYLMGVGSPDALIECSIRGMDMFDCVLPTRIARNGTCMTSQGRLVIKNAKFADDLRPLDENCDCYTCQNYSRAYIRHLIKAEETFGIRLTTIHNLHFLLKLMEDIRQAIREDRLLDFKEEFFEQYGLNVENPKNF</sequence>
<dbReference type="EC" id="2.4.2.29" evidence="1"/>
<dbReference type="EMBL" id="BA000017">
    <property type="protein sequence ID" value="BAB57801.1"/>
    <property type="molecule type" value="Genomic_DNA"/>
</dbReference>
<dbReference type="RefSeq" id="WP_001112045.1">
    <property type="nucleotide sequence ID" value="NC_002758.2"/>
</dbReference>
<dbReference type="SMR" id="P66904"/>
<dbReference type="KEGG" id="sav:SAV1639"/>
<dbReference type="HOGENOM" id="CLU_022060_0_1_9"/>
<dbReference type="PhylomeDB" id="P66904"/>
<dbReference type="UniPathway" id="UPA00392"/>
<dbReference type="Proteomes" id="UP000002481">
    <property type="component" value="Chromosome"/>
</dbReference>
<dbReference type="GO" id="GO:0005829">
    <property type="term" value="C:cytosol"/>
    <property type="evidence" value="ECO:0007669"/>
    <property type="project" value="TreeGrafter"/>
</dbReference>
<dbReference type="GO" id="GO:0046872">
    <property type="term" value="F:metal ion binding"/>
    <property type="evidence" value="ECO:0007669"/>
    <property type="project" value="UniProtKB-KW"/>
</dbReference>
<dbReference type="GO" id="GO:0008479">
    <property type="term" value="F:tRNA-guanosine(34) queuine transglycosylase activity"/>
    <property type="evidence" value="ECO:0007669"/>
    <property type="project" value="UniProtKB-UniRule"/>
</dbReference>
<dbReference type="GO" id="GO:0008616">
    <property type="term" value="P:queuosine biosynthetic process"/>
    <property type="evidence" value="ECO:0007669"/>
    <property type="project" value="UniProtKB-UniRule"/>
</dbReference>
<dbReference type="GO" id="GO:0002099">
    <property type="term" value="P:tRNA wobble guanine modification"/>
    <property type="evidence" value="ECO:0007669"/>
    <property type="project" value="TreeGrafter"/>
</dbReference>
<dbReference type="GO" id="GO:0101030">
    <property type="term" value="P:tRNA-guanine transglycosylation"/>
    <property type="evidence" value="ECO:0007669"/>
    <property type="project" value="InterPro"/>
</dbReference>
<dbReference type="FunFam" id="3.20.20.105:FF:000001">
    <property type="entry name" value="Queuine tRNA-ribosyltransferase"/>
    <property type="match status" value="1"/>
</dbReference>
<dbReference type="Gene3D" id="3.20.20.105">
    <property type="entry name" value="Queuine tRNA-ribosyltransferase-like"/>
    <property type="match status" value="1"/>
</dbReference>
<dbReference type="HAMAP" id="MF_00168">
    <property type="entry name" value="Q_tRNA_Tgt"/>
    <property type="match status" value="1"/>
</dbReference>
<dbReference type="InterPro" id="IPR050076">
    <property type="entry name" value="ArchSynthase1/Queuine_TRR"/>
</dbReference>
<dbReference type="InterPro" id="IPR004803">
    <property type="entry name" value="TGT"/>
</dbReference>
<dbReference type="InterPro" id="IPR036511">
    <property type="entry name" value="TGT-like_sf"/>
</dbReference>
<dbReference type="InterPro" id="IPR002616">
    <property type="entry name" value="tRNA_ribo_trans-like"/>
</dbReference>
<dbReference type="NCBIfam" id="TIGR00430">
    <property type="entry name" value="Q_tRNA_tgt"/>
    <property type="match status" value="1"/>
</dbReference>
<dbReference type="NCBIfam" id="TIGR00449">
    <property type="entry name" value="tgt_general"/>
    <property type="match status" value="1"/>
</dbReference>
<dbReference type="PANTHER" id="PTHR46499">
    <property type="entry name" value="QUEUINE TRNA-RIBOSYLTRANSFERASE"/>
    <property type="match status" value="1"/>
</dbReference>
<dbReference type="PANTHER" id="PTHR46499:SF1">
    <property type="entry name" value="QUEUINE TRNA-RIBOSYLTRANSFERASE"/>
    <property type="match status" value="1"/>
</dbReference>
<dbReference type="Pfam" id="PF01702">
    <property type="entry name" value="TGT"/>
    <property type="match status" value="1"/>
</dbReference>
<dbReference type="SUPFAM" id="SSF51713">
    <property type="entry name" value="tRNA-guanine transglycosylase"/>
    <property type="match status" value="1"/>
</dbReference>
<organism>
    <name type="scientific">Staphylococcus aureus (strain Mu50 / ATCC 700699)</name>
    <dbReference type="NCBI Taxonomy" id="158878"/>
    <lineage>
        <taxon>Bacteria</taxon>
        <taxon>Bacillati</taxon>
        <taxon>Bacillota</taxon>
        <taxon>Bacilli</taxon>
        <taxon>Bacillales</taxon>
        <taxon>Staphylococcaceae</taxon>
        <taxon>Staphylococcus</taxon>
    </lineage>
</organism>
<reference key="1">
    <citation type="journal article" date="2001" name="Lancet">
        <title>Whole genome sequencing of meticillin-resistant Staphylococcus aureus.</title>
        <authorList>
            <person name="Kuroda M."/>
            <person name="Ohta T."/>
            <person name="Uchiyama I."/>
            <person name="Baba T."/>
            <person name="Yuzawa H."/>
            <person name="Kobayashi I."/>
            <person name="Cui L."/>
            <person name="Oguchi A."/>
            <person name="Aoki K."/>
            <person name="Nagai Y."/>
            <person name="Lian J.-Q."/>
            <person name="Ito T."/>
            <person name="Kanamori M."/>
            <person name="Matsumaru H."/>
            <person name="Maruyama A."/>
            <person name="Murakami H."/>
            <person name="Hosoyama A."/>
            <person name="Mizutani-Ui Y."/>
            <person name="Takahashi N.K."/>
            <person name="Sawano T."/>
            <person name="Inoue R."/>
            <person name="Kaito C."/>
            <person name="Sekimizu K."/>
            <person name="Hirakawa H."/>
            <person name="Kuhara S."/>
            <person name="Goto S."/>
            <person name="Yabuzaki J."/>
            <person name="Kanehisa M."/>
            <person name="Yamashita A."/>
            <person name="Oshima K."/>
            <person name="Furuya K."/>
            <person name="Yoshino C."/>
            <person name="Shiba T."/>
            <person name="Hattori M."/>
            <person name="Ogasawara N."/>
            <person name="Hayashi H."/>
            <person name="Hiramatsu K."/>
        </authorList>
    </citation>
    <scope>NUCLEOTIDE SEQUENCE [LARGE SCALE GENOMIC DNA]</scope>
    <source>
        <strain>Mu50 / ATCC 700699</strain>
    </source>
</reference>
<accession>P66904</accession>
<accession>Q99TL4</accession>
<protein>
    <recommendedName>
        <fullName evidence="1">Queuine tRNA-ribosyltransferase</fullName>
        <ecNumber evidence="1">2.4.2.29</ecNumber>
    </recommendedName>
    <alternativeName>
        <fullName evidence="1">Guanine insertion enzyme</fullName>
    </alternativeName>
    <alternativeName>
        <fullName evidence="1">tRNA-guanine transglycosylase</fullName>
    </alternativeName>
</protein>